<dbReference type="EC" id="1.11.1.7"/>
<dbReference type="EMBL" id="AC010657">
    <property type="protein sequence ID" value="AAF63178.1"/>
    <property type="molecule type" value="Genomic_DNA"/>
</dbReference>
<dbReference type="EMBL" id="AC012188">
    <property type="protein sequence ID" value="AAF43954.1"/>
    <property type="molecule type" value="Genomic_DNA"/>
</dbReference>
<dbReference type="EMBL" id="CP002684">
    <property type="protein sequence ID" value="AEE29178.1"/>
    <property type="molecule type" value="Genomic_DNA"/>
</dbReference>
<dbReference type="RefSeq" id="NP_172906.1">
    <property type="nucleotide sequence ID" value="NM_101321.4"/>
</dbReference>
<dbReference type="SMR" id="Q9LE15"/>
<dbReference type="FunCoup" id="Q9LE15">
    <property type="interactions" value="129"/>
</dbReference>
<dbReference type="STRING" id="3702.Q9LE15"/>
<dbReference type="PeroxiBase" id="80">
    <property type="entry name" value="AtPrx04"/>
</dbReference>
<dbReference type="GlyCosmos" id="Q9LE15">
    <property type="glycosylation" value="1 site, No reported glycans"/>
</dbReference>
<dbReference type="GlyGen" id="Q9LE15">
    <property type="glycosylation" value="1 site"/>
</dbReference>
<dbReference type="PaxDb" id="3702-AT1G14540.1"/>
<dbReference type="ProteomicsDB" id="236305"/>
<dbReference type="EnsemblPlants" id="AT1G14540.1">
    <property type="protein sequence ID" value="AT1G14540.1"/>
    <property type="gene ID" value="AT1G14540"/>
</dbReference>
<dbReference type="GeneID" id="838016"/>
<dbReference type="Gramene" id="AT1G14540.1">
    <property type="protein sequence ID" value="AT1G14540.1"/>
    <property type="gene ID" value="AT1G14540"/>
</dbReference>
<dbReference type="KEGG" id="ath:AT1G14540"/>
<dbReference type="Araport" id="AT1G14540"/>
<dbReference type="TAIR" id="AT1G14540">
    <property type="gene designation" value="PER4"/>
</dbReference>
<dbReference type="eggNOG" id="ENOG502QSXF">
    <property type="taxonomic scope" value="Eukaryota"/>
</dbReference>
<dbReference type="HOGENOM" id="CLU_010543_0_1_1"/>
<dbReference type="InParanoid" id="Q9LE15"/>
<dbReference type="OMA" id="NDYNRNP"/>
<dbReference type="OrthoDB" id="2113341at2759"/>
<dbReference type="PhylomeDB" id="Q9LE15"/>
<dbReference type="BioCyc" id="ARA:AT1G14540-MONOMER"/>
<dbReference type="PRO" id="PR:Q9LE15"/>
<dbReference type="Proteomes" id="UP000006548">
    <property type="component" value="Chromosome 1"/>
</dbReference>
<dbReference type="ExpressionAtlas" id="Q9LE15">
    <property type="expression patterns" value="baseline and differential"/>
</dbReference>
<dbReference type="GO" id="GO:0005576">
    <property type="term" value="C:extracellular region"/>
    <property type="evidence" value="ECO:0007669"/>
    <property type="project" value="UniProtKB-SubCell"/>
</dbReference>
<dbReference type="GO" id="GO:0020037">
    <property type="term" value="F:heme binding"/>
    <property type="evidence" value="ECO:0007669"/>
    <property type="project" value="InterPro"/>
</dbReference>
<dbReference type="GO" id="GO:0140825">
    <property type="term" value="F:lactoperoxidase activity"/>
    <property type="evidence" value="ECO:0007669"/>
    <property type="project" value="UniProtKB-EC"/>
</dbReference>
<dbReference type="GO" id="GO:0046872">
    <property type="term" value="F:metal ion binding"/>
    <property type="evidence" value="ECO:0007669"/>
    <property type="project" value="UniProtKB-KW"/>
</dbReference>
<dbReference type="GO" id="GO:0004601">
    <property type="term" value="F:peroxidase activity"/>
    <property type="evidence" value="ECO:0000314"/>
    <property type="project" value="TAIR"/>
</dbReference>
<dbReference type="GO" id="GO:0071456">
    <property type="term" value="P:cellular response to hypoxia"/>
    <property type="evidence" value="ECO:0000270"/>
    <property type="project" value="TAIR"/>
</dbReference>
<dbReference type="GO" id="GO:0042744">
    <property type="term" value="P:hydrogen peroxide catabolic process"/>
    <property type="evidence" value="ECO:0007669"/>
    <property type="project" value="UniProtKB-KW"/>
</dbReference>
<dbReference type="GO" id="GO:0006979">
    <property type="term" value="P:response to oxidative stress"/>
    <property type="evidence" value="ECO:0007669"/>
    <property type="project" value="InterPro"/>
</dbReference>
<dbReference type="CDD" id="cd00693">
    <property type="entry name" value="secretory_peroxidase"/>
    <property type="match status" value="1"/>
</dbReference>
<dbReference type="FunFam" id="1.10.420.10:FF:000001">
    <property type="entry name" value="Peroxidase"/>
    <property type="match status" value="1"/>
</dbReference>
<dbReference type="FunFam" id="1.10.520.10:FF:000009">
    <property type="entry name" value="Peroxidase"/>
    <property type="match status" value="1"/>
</dbReference>
<dbReference type="Gene3D" id="1.10.520.10">
    <property type="match status" value="1"/>
</dbReference>
<dbReference type="Gene3D" id="1.10.420.10">
    <property type="entry name" value="Peroxidase, domain 2"/>
    <property type="match status" value="1"/>
</dbReference>
<dbReference type="InterPro" id="IPR002016">
    <property type="entry name" value="Haem_peroxidase"/>
</dbReference>
<dbReference type="InterPro" id="IPR010255">
    <property type="entry name" value="Haem_peroxidase_sf"/>
</dbReference>
<dbReference type="InterPro" id="IPR000823">
    <property type="entry name" value="Peroxidase_pln"/>
</dbReference>
<dbReference type="InterPro" id="IPR019794">
    <property type="entry name" value="Peroxidases_AS"/>
</dbReference>
<dbReference type="InterPro" id="IPR019793">
    <property type="entry name" value="Peroxidases_heam-ligand_BS"/>
</dbReference>
<dbReference type="InterPro" id="IPR033905">
    <property type="entry name" value="Secretory_peroxidase"/>
</dbReference>
<dbReference type="PANTHER" id="PTHR31388:SF253">
    <property type="entry name" value="PEROXIDASE 4"/>
    <property type="match status" value="1"/>
</dbReference>
<dbReference type="PANTHER" id="PTHR31388">
    <property type="entry name" value="PEROXIDASE 72-RELATED"/>
    <property type="match status" value="1"/>
</dbReference>
<dbReference type="Pfam" id="PF00141">
    <property type="entry name" value="peroxidase"/>
    <property type="match status" value="1"/>
</dbReference>
<dbReference type="PRINTS" id="PR00458">
    <property type="entry name" value="PEROXIDASE"/>
</dbReference>
<dbReference type="PRINTS" id="PR00461">
    <property type="entry name" value="PLPEROXIDASE"/>
</dbReference>
<dbReference type="SUPFAM" id="SSF48113">
    <property type="entry name" value="Heme-dependent peroxidases"/>
    <property type="match status" value="1"/>
</dbReference>
<dbReference type="PROSITE" id="PS00435">
    <property type="entry name" value="PEROXIDASE_1"/>
    <property type="match status" value="1"/>
</dbReference>
<dbReference type="PROSITE" id="PS00436">
    <property type="entry name" value="PEROXIDASE_2"/>
    <property type="match status" value="1"/>
</dbReference>
<dbReference type="PROSITE" id="PS50873">
    <property type="entry name" value="PEROXIDASE_4"/>
    <property type="match status" value="1"/>
</dbReference>
<feature type="signal peptide" evidence="2">
    <location>
        <begin position="1"/>
        <end position="19"/>
    </location>
</feature>
<feature type="chain" id="PRO_0000023670" description="Peroxidase 4">
    <location>
        <begin position="20"/>
        <end position="315"/>
    </location>
</feature>
<feature type="active site" description="Proton acceptor" evidence="3 4">
    <location>
        <position position="61"/>
    </location>
</feature>
<feature type="binding site" evidence="3">
    <location>
        <position position="62"/>
    </location>
    <ligand>
        <name>Ca(2+)</name>
        <dbReference type="ChEBI" id="CHEBI:29108"/>
        <label>1</label>
    </ligand>
</feature>
<feature type="binding site" evidence="3">
    <location>
        <position position="65"/>
    </location>
    <ligand>
        <name>Ca(2+)</name>
        <dbReference type="ChEBI" id="CHEBI:29108"/>
        <label>1</label>
    </ligand>
</feature>
<feature type="binding site" evidence="3">
    <location>
        <position position="67"/>
    </location>
    <ligand>
        <name>Ca(2+)</name>
        <dbReference type="ChEBI" id="CHEBI:29108"/>
        <label>1</label>
    </ligand>
</feature>
<feature type="binding site" evidence="3">
    <location>
        <position position="69"/>
    </location>
    <ligand>
        <name>Ca(2+)</name>
        <dbReference type="ChEBI" id="CHEBI:29108"/>
        <label>1</label>
    </ligand>
</feature>
<feature type="binding site" evidence="3">
    <location>
        <position position="71"/>
    </location>
    <ligand>
        <name>Ca(2+)</name>
        <dbReference type="ChEBI" id="CHEBI:29108"/>
        <label>1</label>
    </ligand>
</feature>
<feature type="binding site" evidence="3">
    <location>
        <position position="158"/>
    </location>
    <ligand>
        <name>substrate</name>
    </ligand>
</feature>
<feature type="binding site" description="axial binding residue" evidence="3">
    <location>
        <position position="188"/>
    </location>
    <ligand>
        <name>heme b</name>
        <dbReference type="ChEBI" id="CHEBI:60344"/>
    </ligand>
    <ligandPart>
        <name>Fe</name>
        <dbReference type="ChEBI" id="CHEBI:18248"/>
    </ligandPart>
</feature>
<feature type="binding site" evidence="3">
    <location>
        <position position="189"/>
    </location>
    <ligand>
        <name>Ca(2+)</name>
        <dbReference type="ChEBI" id="CHEBI:29108"/>
        <label>2</label>
    </ligand>
</feature>
<feature type="binding site" evidence="3">
    <location>
        <position position="234"/>
    </location>
    <ligand>
        <name>Ca(2+)</name>
        <dbReference type="ChEBI" id="CHEBI:29108"/>
        <label>2</label>
    </ligand>
</feature>
<feature type="binding site" evidence="3">
    <location>
        <position position="237"/>
    </location>
    <ligand>
        <name>Ca(2+)</name>
        <dbReference type="ChEBI" id="CHEBI:29108"/>
        <label>2</label>
    </ligand>
</feature>
<feature type="binding site" evidence="3">
    <location>
        <position position="242"/>
    </location>
    <ligand>
        <name>Ca(2+)</name>
        <dbReference type="ChEBI" id="CHEBI:29108"/>
        <label>2</label>
    </ligand>
</feature>
<feature type="site" description="Transition state stabilizer" evidence="3">
    <location>
        <position position="57"/>
    </location>
</feature>
<feature type="modified residue" description="Pyrrolidone carboxylic acid" evidence="1 3">
    <location>
        <position position="20"/>
    </location>
</feature>
<feature type="glycosylation site" description="N-linked (GlcNAc...) asparagine" evidence="2">
    <location>
        <position position="205"/>
    </location>
</feature>
<feature type="disulfide bond" evidence="3">
    <location>
        <begin position="30"/>
        <end position="110"/>
    </location>
</feature>
<feature type="disulfide bond" evidence="3">
    <location>
        <begin position="63"/>
        <end position="68"/>
    </location>
</feature>
<feature type="disulfide bond" evidence="3">
    <location>
        <begin position="116"/>
        <end position="311"/>
    </location>
</feature>
<feature type="disulfide bond" evidence="3">
    <location>
        <begin position="195"/>
        <end position="221"/>
    </location>
</feature>
<proteinExistence type="inferred from homology"/>
<evidence type="ECO:0000250" key="1">
    <source>
        <dbReference type="UniProtKB" id="P00434"/>
    </source>
</evidence>
<evidence type="ECO:0000255" key="2"/>
<evidence type="ECO:0000255" key="3">
    <source>
        <dbReference type="PROSITE-ProRule" id="PRU00297"/>
    </source>
</evidence>
<evidence type="ECO:0000255" key="4">
    <source>
        <dbReference type="PROSITE-ProRule" id="PRU10012"/>
    </source>
</evidence>
<comment type="function">
    <text>Removal of H(2)O(2), oxidation of toxic reductants, biosynthesis and degradation of lignin, suberization, auxin catabolism, response to environmental stresses such as wounding, pathogen attack and oxidative stress. These functions might be dependent on each isozyme/isoform in each plant tissue.</text>
</comment>
<comment type="catalytic activity">
    <reaction>
        <text>2 a phenolic donor + H2O2 = 2 a phenolic radical donor + 2 H2O</text>
        <dbReference type="Rhea" id="RHEA:56136"/>
        <dbReference type="ChEBI" id="CHEBI:15377"/>
        <dbReference type="ChEBI" id="CHEBI:16240"/>
        <dbReference type="ChEBI" id="CHEBI:139520"/>
        <dbReference type="ChEBI" id="CHEBI:139521"/>
        <dbReference type="EC" id="1.11.1.7"/>
    </reaction>
</comment>
<comment type="cofactor">
    <cofactor evidence="3">
        <name>heme b</name>
        <dbReference type="ChEBI" id="CHEBI:60344"/>
    </cofactor>
    <text evidence="3">Binds 1 heme b (iron(II)-protoporphyrin IX) group per subunit.</text>
</comment>
<comment type="cofactor">
    <cofactor evidence="3">
        <name>Ca(2+)</name>
        <dbReference type="ChEBI" id="CHEBI:29108"/>
    </cofactor>
    <text evidence="3">Binds 2 calcium ions per subunit.</text>
</comment>
<comment type="subcellular location">
    <subcellularLocation>
        <location evidence="3">Secreted</location>
    </subcellularLocation>
</comment>
<comment type="miscellaneous">
    <text>There are 73 peroxidase genes in A.thaliana.</text>
</comment>
<comment type="similarity">
    <text evidence="3">Belongs to the peroxidase family. Classical plant (class III) peroxidase subfamily.</text>
</comment>
<gene>
    <name type="primary">PER4</name>
    <name type="synonym">P4</name>
    <name type="ordered locus">At1g14540</name>
    <name type="ORF">F14L17.32</name>
    <name type="ORF">T5E21.4</name>
</gene>
<accession>Q9LE15</accession>
<organism>
    <name type="scientific">Arabidopsis thaliana</name>
    <name type="common">Mouse-ear cress</name>
    <dbReference type="NCBI Taxonomy" id="3702"/>
    <lineage>
        <taxon>Eukaryota</taxon>
        <taxon>Viridiplantae</taxon>
        <taxon>Streptophyta</taxon>
        <taxon>Embryophyta</taxon>
        <taxon>Tracheophyta</taxon>
        <taxon>Spermatophyta</taxon>
        <taxon>Magnoliopsida</taxon>
        <taxon>eudicotyledons</taxon>
        <taxon>Gunneridae</taxon>
        <taxon>Pentapetalae</taxon>
        <taxon>rosids</taxon>
        <taxon>malvids</taxon>
        <taxon>Brassicales</taxon>
        <taxon>Brassicaceae</taxon>
        <taxon>Camelineae</taxon>
        <taxon>Arabidopsis</taxon>
    </lineage>
</organism>
<sequence>MAIFKILVLLLSLCCFSQAQLSPTFYDQTCQNALSTIRSSIRTAISRERRMAASLIRLHFHDCFVNGCDASVMLVATPTMESERDSLANFQSARGFEVIDQAKSAVESVCPGVVSCADIIAVAARDASEYVGGPRYDVKVGRRDSTNAFRAIADRDLPNFRASLNDLSELFLRKGLNTRDLVALSGAHTLGQAQCLTFKGRLYDNSSDIDAGFSSTRKRRCPVNGGDTTLAPLDQVTPNSFDNNYYRNLMQKKGLLESDQVLFGTGASTDSIVTEYSRNPSRFASDFSAAMIKMGDIQTLTGSDGQIRRICSAVN</sequence>
<name>PER4_ARATH</name>
<protein>
    <recommendedName>
        <fullName>Peroxidase 4</fullName>
        <shortName>Atperox P4</shortName>
        <ecNumber>1.11.1.7</ecNumber>
    </recommendedName>
    <alternativeName>
        <fullName>ATP46</fullName>
    </alternativeName>
</protein>
<reference key="1">
    <citation type="journal article" date="2000" name="Nature">
        <title>Sequence and analysis of chromosome 1 of the plant Arabidopsis thaliana.</title>
        <authorList>
            <person name="Theologis A."/>
            <person name="Ecker J.R."/>
            <person name="Palm C.J."/>
            <person name="Federspiel N.A."/>
            <person name="Kaul S."/>
            <person name="White O."/>
            <person name="Alonso J."/>
            <person name="Altafi H."/>
            <person name="Araujo R."/>
            <person name="Bowman C.L."/>
            <person name="Brooks S.Y."/>
            <person name="Buehler E."/>
            <person name="Chan A."/>
            <person name="Chao Q."/>
            <person name="Chen H."/>
            <person name="Cheuk R.F."/>
            <person name="Chin C.W."/>
            <person name="Chung M.K."/>
            <person name="Conn L."/>
            <person name="Conway A.B."/>
            <person name="Conway A.R."/>
            <person name="Creasy T.H."/>
            <person name="Dewar K."/>
            <person name="Dunn P."/>
            <person name="Etgu P."/>
            <person name="Feldblyum T.V."/>
            <person name="Feng J.-D."/>
            <person name="Fong B."/>
            <person name="Fujii C.Y."/>
            <person name="Gill J.E."/>
            <person name="Goldsmith A.D."/>
            <person name="Haas B."/>
            <person name="Hansen N.F."/>
            <person name="Hughes B."/>
            <person name="Huizar L."/>
            <person name="Hunter J.L."/>
            <person name="Jenkins J."/>
            <person name="Johnson-Hopson C."/>
            <person name="Khan S."/>
            <person name="Khaykin E."/>
            <person name="Kim C.J."/>
            <person name="Koo H.L."/>
            <person name="Kremenetskaia I."/>
            <person name="Kurtz D.B."/>
            <person name="Kwan A."/>
            <person name="Lam B."/>
            <person name="Langin-Hooper S."/>
            <person name="Lee A."/>
            <person name="Lee J.M."/>
            <person name="Lenz C.A."/>
            <person name="Li J.H."/>
            <person name="Li Y.-P."/>
            <person name="Lin X."/>
            <person name="Liu S.X."/>
            <person name="Liu Z.A."/>
            <person name="Luros J.S."/>
            <person name="Maiti R."/>
            <person name="Marziali A."/>
            <person name="Militscher J."/>
            <person name="Miranda M."/>
            <person name="Nguyen M."/>
            <person name="Nierman W.C."/>
            <person name="Osborne B.I."/>
            <person name="Pai G."/>
            <person name="Peterson J."/>
            <person name="Pham P.K."/>
            <person name="Rizzo M."/>
            <person name="Rooney T."/>
            <person name="Rowley D."/>
            <person name="Sakano H."/>
            <person name="Salzberg S.L."/>
            <person name="Schwartz J.R."/>
            <person name="Shinn P."/>
            <person name="Southwick A.M."/>
            <person name="Sun H."/>
            <person name="Tallon L.J."/>
            <person name="Tambunga G."/>
            <person name="Toriumi M.J."/>
            <person name="Town C.D."/>
            <person name="Utterback T."/>
            <person name="Van Aken S."/>
            <person name="Vaysberg M."/>
            <person name="Vysotskaia V.S."/>
            <person name="Walker M."/>
            <person name="Wu D."/>
            <person name="Yu G."/>
            <person name="Fraser C.M."/>
            <person name="Venter J.C."/>
            <person name="Davis R.W."/>
        </authorList>
    </citation>
    <scope>NUCLEOTIDE SEQUENCE [LARGE SCALE GENOMIC DNA]</scope>
    <source>
        <strain>cv. Columbia</strain>
    </source>
</reference>
<reference key="2">
    <citation type="journal article" date="2017" name="Plant J.">
        <title>Araport11: a complete reannotation of the Arabidopsis thaliana reference genome.</title>
        <authorList>
            <person name="Cheng C.Y."/>
            <person name="Krishnakumar V."/>
            <person name="Chan A.P."/>
            <person name="Thibaud-Nissen F."/>
            <person name="Schobel S."/>
            <person name="Town C.D."/>
        </authorList>
    </citation>
    <scope>GENOME REANNOTATION</scope>
    <source>
        <strain>cv. Columbia</strain>
    </source>
</reference>
<reference key="3">
    <citation type="journal article" date="2002" name="Gene">
        <title>Analysis and expression of the class III peroxidase large gene family in Arabidopsis thaliana.</title>
        <authorList>
            <person name="Tognolli M."/>
            <person name="Penel C."/>
            <person name="Greppin H."/>
            <person name="Simon P."/>
        </authorList>
    </citation>
    <scope>GENE FAMILY ORGANIZATION</scope>
    <scope>NOMENCLATURE</scope>
    <source>
        <strain>cv. Columbia</strain>
    </source>
</reference>
<keyword id="KW-0106">Calcium</keyword>
<keyword id="KW-1015">Disulfide bond</keyword>
<keyword id="KW-0325">Glycoprotein</keyword>
<keyword id="KW-0349">Heme</keyword>
<keyword id="KW-0376">Hydrogen peroxide</keyword>
<keyword id="KW-0408">Iron</keyword>
<keyword id="KW-0479">Metal-binding</keyword>
<keyword id="KW-0560">Oxidoreductase</keyword>
<keyword id="KW-0575">Peroxidase</keyword>
<keyword id="KW-0873">Pyrrolidone carboxylic acid</keyword>
<keyword id="KW-1185">Reference proteome</keyword>
<keyword id="KW-0964">Secreted</keyword>
<keyword id="KW-0732">Signal</keyword>